<comment type="function">
    <text evidence="1">As part of a cytosolic protein quality control complex, the bag6/bat3 complex, maintains misfolded and hydrophobic patches-containing proteins in a soluble state and participates in their proper delivery to the endoplasmic reticulum or alternatively can promote their sorting to the proteasome where they undergo degradation. The bag6/bat3 complex is involved in the post-translational delivery of tail-anchored/type II transmembrane proteins to the endoplasmic reticulum membrane. Similarly, the bag6/bat3 complex also functions as a sorting platform for proteins of the secretory pathway that are mislocalized to the cytosol either delivering them to the proteasome for degradation or to the endoplasmic reticulum. The bag6/bat3 complex also plays a role in the endoplasmic reticulum-associated degradation (ERAD), a quality control mechanism that eliminates unwanted proteins of the endoplasmic reticulum through their retrotranslocation to the cytosol and their targeting to the proteasome. It maintains these retrotranslocated proteins in an unfolded yet soluble state condition in the cytosol to ensure their proper delivery to the proteasome.</text>
</comment>
<comment type="subunit">
    <text evidence="1">Component of the bag6/bat3 complex.</text>
</comment>
<comment type="subcellular location">
    <subcellularLocation>
        <location evidence="1">Cytoplasm</location>
        <location evidence="1">Cytosol</location>
    </subcellularLocation>
    <subcellularLocation>
        <location evidence="1">Nucleus</location>
    </subcellularLocation>
</comment>
<accession>Q7ZWB2</accession>
<dbReference type="EMBL" id="CR855300">
    <property type="protein sequence ID" value="CAX14238.1"/>
    <property type="molecule type" value="Genomic_DNA"/>
</dbReference>
<dbReference type="EMBL" id="BC049498">
    <property type="protein sequence ID" value="AAH49498.1"/>
    <property type="molecule type" value="mRNA"/>
</dbReference>
<dbReference type="RefSeq" id="NP_956594.1">
    <property type="nucleotide sequence ID" value="NM_200300.1"/>
</dbReference>
<dbReference type="SMR" id="Q7ZWB2"/>
<dbReference type="FunCoup" id="Q7ZWB2">
    <property type="interactions" value="967"/>
</dbReference>
<dbReference type="STRING" id="7955.ENSDARP00000009190"/>
<dbReference type="PaxDb" id="7955-ENSDARP00000009190"/>
<dbReference type="Ensembl" id="ENSDART00000013870">
    <property type="protein sequence ID" value="ENSDARP00000009190"/>
    <property type="gene ID" value="ENSDARG00000007359"/>
</dbReference>
<dbReference type="GeneID" id="393270"/>
<dbReference type="KEGG" id="dre:393270"/>
<dbReference type="AGR" id="ZFIN:ZDB-GENE-040426-1089"/>
<dbReference type="ZFIN" id="ZDB-GENE-040426-1089">
    <property type="gene designation" value="zgc:56596"/>
</dbReference>
<dbReference type="eggNOG" id="KOG0001">
    <property type="taxonomic scope" value="Eukaryota"/>
</dbReference>
<dbReference type="HOGENOM" id="CLU_119809_0_0_1"/>
<dbReference type="InParanoid" id="Q7ZWB2"/>
<dbReference type="OMA" id="SMDTSYM"/>
<dbReference type="OrthoDB" id="417450at2759"/>
<dbReference type="PhylomeDB" id="Q7ZWB2"/>
<dbReference type="TreeFam" id="TF354228"/>
<dbReference type="PRO" id="PR:Q7ZWB2"/>
<dbReference type="Proteomes" id="UP000000437">
    <property type="component" value="Chromosome 8"/>
</dbReference>
<dbReference type="Bgee" id="ENSDARG00000007359">
    <property type="expression patterns" value="Expressed in testis and 28 other cell types or tissues"/>
</dbReference>
<dbReference type="GO" id="GO:0071818">
    <property type="term" value="C:BAT3 complex"/>
    <property type="evidence" value="ECO:0000250"/>
    <property type="project" value="UniProtKB"/>
</dbReference>
<dbReference type="GO" id="GO:0005829">
    <property type="term" value="C:cytosol"/>
    <property type="evidence" value="ECO:0000250"/>
    <property type="project" value="UniProtKB"/>
</dbReference>
<dbReference type="GO" id="GO:0005634">
    <property type="term" value="C:nucleus"/>
    <property type="evidence" value="ECO:0007669"/>
    <property type="project" value="UniProtKB-SubCell"/>
</dbReference>
<dbReference type="GO" id="GO:0051087">
    <property type="term" value="F:protein-folding chaperone binding"/>
    <property type="evidence" value="ECO:0000318"/>
    <property type="project" value="GO_Central"/>
</dbReference>
<dbReference type="GO" id="GO:0006620">
    <property type="term" value="P:post-translational protein targeting to endoplasmic reticulum membrane"/>
    <property type="evidence" value="ECO:0000318"/>
    <property type="project" value="GO_Central"/>
</dbReference>
<dbReference type="GO" id="GO:0071816">
    <property type="term" value="P:tail-anchored membrane protein insertion into ER membrane"/>
    <property type="evidence" value="ECO:0000250"/>
    <property type="project" value="UniProtKB"/>
</dbReference>
<dbReference type="CDD" id="cd01807">
    <property type="entry name" value="Ubl_UBL4A_like"/>
    <property type="match status" value="1"/>
</dbReference>
<dbReference type="FunFam" id="3.10.20.90:FF:000144">
    <property type="entry name" value="Ubiquitin-like protein 4A"/>
    <property type="match status" value="1"/>
</dbReference>
<dbReference type="Gene3D" id="3.10.20.90">
    <property type="entry name" value="Phosphatidylinositol 3-kinase Catalytic Subunit, Chain A, domain 1"/>
    <property type="match status" value="1"/>
</dbReference>
<dbReference type="InterPro" id="IPR000626">
    <property type="entry name" value="Ubiquitin-like_dom"/>
</dbReference>
<dbReference type="InterPro" id="IPR029071">
    <property type="entry name" value="Ubiquitin-like_domsf"/>
</dbReference>
<dbReference type="InterPro" id="IPR019954">
    <property type="entry name" value="Ubiquitin_CS"/>
</dbReference>
<dbReference type="InterPro" id="IPR019956">
    <property type="entry name" value="Ubiquitin_dom"/>
</dbReference>
<dbReference type="InterPro" id="IPR041421">
    <property type="entry name" value="Ubl4_C_TUGS"/>
</dbReference>
<dbReference type="InterPro" id="IPR047154">
    <property type="entry name" value="UBL4A-like"/>
</dbReference>
<dbReference type="InterPro" id="IPR044724">
    <property type="entry name" value="Ubl_UBL4A-like"/>
</dbReference>
<dbReference type="PANTHER" id="PTHR46555">
    <property type="entry name" value="UBIQUITIN-LIKE PROTEIN 4A"/>
    <property type="match status" value="1"/>
</dbReference>
<dbReference type="PANTHER" id="PTHR46555:SF1">
    <property type="entry name" value="UBIQUITIN-LIKE PROTEIN 4A"/>
    <property type="match status" value="1"/>
</dbReference>
<dbReference type="Pfam" id="PF17840">
    <property type="entry name" value="Tugs"/>
    <property type="match status" value="1"/>
</dbReference>
<dbReference type="Pfam" id="PF00240">
    <property type="entry name" value="ubiquitin"/>
    <property type="match status" value="1"/>
</dbReference>
<dbReference type="PRINTS" id="PR00348">
    <property type="entry name" value="UBIQUITIN"/>
</dbReference>
<dbReference type="SMART" id="SM00213">
    <property type="entry name" value="UBQ"/>
    <property type="match status" value="1"/>
</dbReference>
<dbReference type="SUPFAM" id="SSF54236">
    <property type="entry name" value="Ubiquitin-like"/>
    <property type="match status" value="1"/>
</dbReference>
<dbReference type="PROSITE" id="PS00299">
    <property type="entry name" value="UBIQUITIN_1"/>
    <property type="match status" value="1"/>
</dbReference>
<dbReference type="PROSITE" id="PS50053">
    <property type="entry name" value="UBIQUITIN_2"/>
    <property type="match status" value="1"/>
</dbReference>
<organism>
    <name type="scientific">Danio rerio</name>
    <name type="common">Zebrafish</name>
    <name type="synonym">Brachydanio rerio</name>
    <dbReference type="NCBI Taxonomy" id="7955"/>
    <lineage>
        <taxon>Eukaryota</taxon>
        <taxon>Metazoa</taxon>
        <taxon>Chordata</taxon>
        <taxon>Craniata</taxon>
        <taxon>Vertebrata</taxon>
        <taxon>Euteleostomi</taxon>
        <taxon>Actinopterygii</taxon>
        <taxon>Neopterygii</taxon>
        <taxon>Teleostei</taxon>
        <taxon>Ostariophysi</taxon>
        <taxon>Cypriniformes</taxon>
        <taxon>Danionidae</taxon>
        <taxon>Danioninae</taxon>
        <taxon>Danio</taxon>
    </lineage>
</organism>
<reference key="1">
    <citation type="journal article" date="2013" name="Nature">
        <title>The zebrafish reference genome sequence and its relationship to the human genome.</title>
        <authorList>
            <person name="Howe K."/>
            <person name="Clark M.D."/>
            <person name="Torroja C.F."/>
            <person name="Torrance J."/>
            <person name="Berthelot C."/>
            <person name="Muffato M."/>
            <person name="Collins J.E."/>
            <person name="Humphray S."/>
            <person name="McLaren K."/>
            <person name="Matthews L."/>
            <person name="McLaren S."/>
            <person name="Sealy I."/>
            <person name="Caccamo M."/>
            <person name="Churcher C."/>
            <person name="Scott C."/>
            <person name="Barrett J.C."/>
            <person name="Koch R."/>
            <person name="Rauch G.J."/>
            <person name="White S."/>
            <person name="Chow W."/>
            <person name="Kilian B."/>
            <person name="Quintais L.T."/>
            <person name="Guerra-Assuncao J.A."/>
            <person name="Zhou Y."/>
            <person name="Gu Y."/>
            <person name="Yen J."/>
            <person name="Vogel J.H."/>
            <person name="Eyre T."/>
            <person name="Redmond S."/>
            <person name="Banerjee R."/>
            <person name="Chi J."/>
            <person name="Fu B."/>
            <person name="Langley E."/>
            <person name="Maguire S.F."/>
            <person name="Laird G.K."/>
            <person name="Lloyd D."/>
            <person name="Kenyon E."/>
            <person name="Donaldson S."/>
            <person name="Sehra H."/>
            <person name="Almeida-King J."/>
            <person name="Loveland J."/>
            <person name="Trevanion S."/>
            <person name="Jones M."/>
            <person name="Quail M."/>
            <person name="Willey D."/>
            <person name="Hunt A."/>
            <person name="Burton J."/>
            <person name="Sims S."/>
            <person name="McLay K."/>
            <person name="Plumb B."/>
            <person name="Davis J."/>
            <person name="Clee C."/>
            <person name="Oliver K."/>
            <person name="Clark R."/>
            <person name="Riddle C."/>
            <person name="Elliot D."/>
            <person name="Threadgold G."/>
            <person name="Harden G."/>
            <person name="Ware D."/>
            <person name="Begum S."/>
            <person name="Mortimore B."/>
            <person name="Kerry G."/>
            <person name="Heath P."/>
            <person name="Phillimore B."/>
            <person name="Tracey A."/>
            <person name="Corby N."/>
            <person name="Dunn M."/>
            <person name="Johnson C."/>
            <person name="Wood J."/>
            <person name="Clark S."/>
            <person name="Pelan S."/>
            <person name="Griffiths G."/>
            <person name="Smith M."/>
            <person name="Glithero R."/>
            <person name="Howden P."/>
            <person name="Barker N."/>
            <person name="Lloyd C."/>
            <person name="Stevens C."/>
            <person name="Harley J."/>
            <person name="Holt K."/>
            <person name="Panagiotidis G."/>
            <person name="Lovell J."/>
            <person name="Beasley H."/>
            <person name="Henderson C."/>
            <person name="Gordon D."/>
            <person name="Auger K."/>
            <person name="Wright D."/>
            <person name="Collins J."/>
            <person name="Raisen C."/>
            <person name="Dyer L."/>
            <person name="Leung K."/>
            <person name="Robertson L."/>
            <person name="Ambridge K."/>
            <person name="Leongamornlert D."/>
            <person name="McGuire S."/>
            <person name="Gilderthorp R."/>
            <person name="Griffiths C."/>
            <person name="Manthravadi D."/>
            <person name="Nichol S."/>
            <person name="Barker G."/>
            <person name="Whitehead S."/>
            <person name="Kay M."/>
            <person name="Brown J."/>
            <person name="Murnane C."/>
            <person name="Gray E."/>
            <person name="Humphries M."/>
            <person name="Sycamore N."/>
            <person name="Barker D."/>
            <person name="Saunders D."/>
            <person name="Wallis J."/>
            <person name="Babbage A."/>
            <person name="Hammond S."/>
            <person name="Mashreghi-Mohammadi M."/>
            <person name="Barr L."/>
            <person name="Martin S."/>
            <person name="Wray P."/>
            <person name="Ellington A."/>
            <person name="Matthews N."/>
            <person name="Ellwood M."/>
            <person name="Woodmansey R."/>
            <person name="Clark G."/>
            <person name="Cooper J."/>
            <person name="Tromans A."/>
            <person name="Grafham D."/>
            <person name="Skuce C."/>
            <person name="Pandian R."/>
            <person name="Andrews R."/>
            <person name="Harrison E."/>
            <person name="Kimberley A."/>
            <person name="Garnett J."/>
            <person name="Fosker N."/>
            <person name="Hall R."/>
            <person name="Garner P."/>
            <person name="Kelly D."/>
            <person name="Bird C."/>
            <person name="Palmer S."/>
            <person name="Gehring I."/>
            <person name="Berger A."/>
            <person name="Dooley C.M."/>
            <person name="Ersan-Urun Z."/>
            <person name="Eser C."/>
            <person name="Geiger H."/>
            <person name="Geisler M."/>
            <person name="Karotki L."/>
            <person name="Kirn A."/>
            <person name="Konantz J."/>
            <person name="Konantz M."/>
            <person name="Oberlander M."/>
            <person name="Rudolph-Geiger S."/>
            <person name="Teucke M."/>
            <person name="Lanz C."/>
            <person name="Raddatz G."/>
            <person name="Osoegawa K."/>
            <person name="Zhu B."/>
            <person name="Rapp A."/>
            <person name="Widaa S."/>
            <person name="Langford C."/>
            <person name="Yang F."/>
            <person name="Schuster S.C."/>
            <person name="Carter N.P."/>
            <person name="Harrow J."/>
            <person name="Ning Z."/>
            <person name="Herrero J."/>
            <person name="Searle S.M."/>
            <person name="Enright A."/>
            <person name="Geisler R."/>
            <person name="Plasterk R.H."/>
            <person name="Lee C."/>
            <person name="Westerfield M."/>
            <person name="de Jong P.J."/>
            <person name="Zon L.I."/>
            <person name="Postlethwait J.H."/>
            <person name="Nusslein-Volhard C."/>
            <person name="Hubbard T.J."/>
            <person name="Roest Crollius H."/>
            <person name="Rogers J."/>
            <person name="Stemple D.L."/>
        </authorList>
    </citation>
    <scope>NUCLEOTIDE SEQUENCE [LARGE SCALE GENOMIC DNA]</scope>
    <source>
        <strain>Tuebingen</strain>
    </source>
</reference>
<reference key="2">
    <citation type="submission" date="2003-03" db="EMBL/GenBank/DDBJ databases">
        <authorList>
            <consortium name="NIH - Zebrafish Gene Collection (ZGC) project"/>
        </authorList>
    </citation>
    <scope>NUCLEOTIDE SEQUENCE [LARGE SCALE MRNA]</scope>
</reference>
<sequence length="157" mass="17320">MILTVKPLQGKECNVQVTENEKVSTVKELVSERLNIPASQQRLLYKGKALADEHRLSDYSIGPEAKLNLVVRPAGERSSGAVGTSSANNDKGGSGVWQLLSTVLAKHFSPADAAKVQEQLIKDYERSLRQLSLDDIERLASRLLHPETEVMDTSYMD</sequence>
<protein>
    <recommendedName>
        <fullName>Ubiquitin-like protein 4A</fullName>
    </recommendedName>
</protein>
<keyword id="KW-0963">Cytoplasm</keyword>
<keyword id="KW-0539">Nucleus</keyword>
<keyword id="KW-1185">Reference proteome</keyword>
<keyword id="KW-0813">Transport</keyword>
<name>UBL4A_DANRE</name>
<gene>
    <name type="primary">ubl4a</name>
    <name type="ORF">si:dkey-32e23.2</name>
    <name type="ORF">zgc:56596</name>
</gene>
<evidence type="ECO:0000250" key="1">
    <source>
        <dbReference type="UniProtKB" id="P11441"/>
    </source>
</evidence>
<evidence type="ECO:0000255" key="2">
    <source>
        <dbReference type="PROSITE-ProRule" id="PRU00214"/>
    </source>
</evidence>
<feature type="chain" id="PRO_0000403742" description="Ubiquitin-like protein 4A">
    <location>
        <begin position="1"/>
        <end position="157"/>
    </location>
</feature>
<feature type="domain" description="Ubiquitin-like" evidence="2">
    <location>
        <begin position="1"/>
        <end position="76"/>
    </location>
</feature>
<proteinExistence type="evidence at transcript level"/>